<reference key="1">
    <citation type="journal article" date="2002" name="BMC Genomics">
        <title>Cynomolgus monkey testicular cDNAs for discovery of novel human genes in the human genome sequence.</title>
        <authorList>
            <person name="Osada N."/>
            <person name="Hida M."/>
            <person name="Kusuda J."/>
            <person name="Tanuma R."/>
            <person name="Hirata M."/>
            <person name="Suto Y."/>
            <person name="Hirai M."/>
            <person name="Terao K."/>
            <person name="Sugano S."/>
            <person name="Hashimoto K."/>
        </authorList>
    </citation>
    <scope>NUCLEOTIDE SEQUENCE [LARGE SCALE MRNA]</scope>
    <source>
        <tissue>Testis</tissue>
    </source>
</reference>
<reference key="2">
    <citation type="submission" date="2000-10" db="EMBL/GenBank/DDBJ databases">
        <title>Isolation of full-length cDNA clones from macaque brain cDNA libraries.</title>
        <authorList>
            <person name="Osada N."/>
            <person name="Hida M."/>
            <person name="Kusuda J."/>
            <person name="Tanuma R."/>
            <person name="Iseki K."/>
            <person name="Hirai M."/>
            <person name="Terao K."/>
            <person name="Suzuki Y."/>
            <person name="Sugano S."/>
            <person name="Hashimoto K."/>
        </authorList>
    </citation>
    <scope>NUCLEOTIDE SEQUENCE [LARGE SCALE MRNA]</scope>
    <source>
        <tissue>Parietal cortex</tissue>
    </source>
</reference>
<feature type="chain" id="PRO_0000251606" description="Spermatogenesis-associated protein 22">
    <location>
        <begin position="1"/>
        <end position="363"/>
    </location>
</feature>
<feature type="region of interest" description="Disordered" evidence="3">
    <location>
        <begin position="1"/>
        <end position="51"/>
    </location>
</feature>
<feature type="region of interest" description="Disordered" evidence="3">
    <location>
        <begin position="145"/>
        <end position="169"/>
    </location>
</feature>
<feature type="compositionally biased region" description="Polar residues" evidence="3">
    <location>
        <begin position="1"/>
        <end position="12"/>
    </location>
</feature>
<feature type="compositionally biased region" description="Polar residues" evidence="3">
    <location>
        <begin position="145"/>
        <end position="157"/>
    </location>
</feature>
<feature type="sequence conflict" description="In Ref. 2; BAB17008." evidence="4" ref="2">
    <original>P</original>
    <variation>S</variation>
    <location>
        <position position="85"/>
    </location>
</feature>
<feature type="sequence conflict" description="In Ref. 2; BAB17008." evidence="4" ref="2">
    <original>S</original>
    <variation>R</variation>
    <location>
        <position position="112"/>
    </location>
</feature>
<feature type="sequence conflict" description="In Ref. 2; BAB17008." evidence="4" ref="2">
    <original>P</original>
    <variation>S</variation>
    <location>
        <position position="161"/>
    </location>
</feature>
<feature type="sequence conflict" description="In Ref. 2; BAB17008." evidence="4" ref="2">
    <original>F</original>
    <variation>Y</variation>
    <location>
        <position position="298"/>
    </location>
</feature>
<accession>Q95JQ1</accession>
<accession>Q9GM15</accession>
<proteinExistence type="evidence at transcript level"/>
<name>SPT22_MACFA</name>
<comment type="function">
    <text evidence="1">Meiosis-specific protein required for homologous recombination in meiosis I.</text>
</comment>
<comment type="subunit">
    <text evidence="1 2">Component of a multiprotein complex with MEIOB and RPA2. Interacts with MEIOB (By similarity). Interacts with the complex BRME1:HSF2BP:BRCA2.</text>
</comment>
<comment type="subcellular location">
    <subcellularLocation>
        <location evidence="1">Chromosome</location>
    </subcellularLocation>
    <text evidence="1">Localizes on meiotic chromosome axes. Accumulates on resected DNA. Localization is dependent on MEIOB.</text>
</comment>
<comment type="tissue specificity">
    <text>Expressed in testis.</text>
</comment>
<dbReference type="EMBL" id="AB070129">
    <property type="protein sequence ID" value="BAB63074.1"/>
    <property type="molecule type" value="mRNA"/>
</dbReference>
<dbReference type="EMBL" id="AB050257">
    <property type="protein sequence ID" value="BAB17008.1"/>
    <property type="molecule type" value="mRNA"/>
</dbReference>
<dbReference type="RefSeq" id="NP_001270464.1">
    <property type="nucleotide sequence ID" value="NM_001283535.1"/>
</dbReference>
<dbReference type="STRING" id="9541.ENSMFAP00000044853"/>
<dbReference type="eggNOG" id="ENOG502RNNP">
    <property type="taxonomic scope" value="Eukaryota"/>
</dbReference>
<dbReference type="Proteomes" id="UP000233100">
    <property type="component" value="Unplaced"/>
</dbReference>
<dbReference type="GO" id="GO:0005694">
    <property type="term" value="C:chromosome"/>
    <property type="evidence" value="ECO:0000250"/>
    <property type="project" value="UniProtKB"/>
</dbReference>
<dbReference type="GO" id="GO:0007276">
    <property type="term" value="P:gamete generation"/>
    <property type="evidence" value="ECO:0007669"/>
    <property type="project" value="InterPro"/>
</dbReference>
<dbReference type="GO" id="GO:0007129">
    <property type="term" value="P:homologous chromosome pairing at meiosis"/>
    <property type="evidence" value="ECO:0007669"/>
    <property type="project" value="InterPro"/>
</dbReference>
<dbReference type="GO" id="GO:0000711">
    <property type="term" value="P:meiotic DNA repair synthesis"/>
    <property type="evidence" value="ECO:0007669"/>
    <property type="project" value="InterPro"/>
</dbReference>
<dbReference type="GO" id="GO:0051445">
    <property type="term" value="P:regulation of meiotic cell cycle"/>
    <property type="evidence" value="ECO:0007669"/>
    <property type="project" value="TreeGrafter"/>
</dbReference>
<dbReference type="InterPro" id="IPR033536">
    <property type="entry name" value="Spata22"/>
</dbReference>
<dbReference type="PANTHER" id="PTHR35258">
    <property type="entry name" value="SPERMATOGENESIS-ASSOCIATED PROTEIN 22"/>
    <property type="match status" value="1"/>
</dbReference>
<dbReference type="PANTHER" id="PTHR35258:SF1">
    <property type="entry name" value="SPERMATOGENESIS-ASSOCIATED PROTEIN 22"/>
    <property type="match status" value="1"/>
</dbReference>
<protein>
    <recommendedName>
        <fullName>Spermatogenesis-associated protein 22</fullName>
    </recommendedName>
</protein>
<keyword id="KW-0158">Chromosome</keyword>
<keyword id="KW-0469">Meiosis</keyword>
<keyword id="KW-1185">Reference proteome</keyword>
<sequence length="363" mass="41422">MKRSLNENSARSTAGCLPVPLFNQKKRNRQPLTSNPLKDDPGISTPSDNYDFPPLPTDWAWEAMNAELAPVMKTVDTGQIPHSVPRPLRSQDSIFNSIQSNTERSQGGWSYSDNNKNTSLKTWNKNDFKPQCKRTNLVANDGKNSCPMSSGAQQQKQFGIPEPPNLPRNKETELLRQTHSSKISGSTMRGLDKNSALQTFKPNFQQNQYKKQMLDDIPEDNTLKETSLFQLQFKEKANSLRIISAVIESMKYWREHAQKTVLLFEVLAVLDSAVTPGPYYSKTFLMRDGKNTLPCVFFEIDRELPRLIRGRVHRCVGNYDQKKNIFKCVSVRPASVSEQKSFQAFVKIADVEMRYYINVMNET</sequence>
<evidence type="ECO:0000250" key="1">
    <source>
        <dbReference type="UniProtKB" id="Q5SV06"/>
    </source>
</evidence>
<evidence type="ECO:0000250" key="2">
    <source>
        <dbReference type="UniProtKB" id="Q8NHS9"/>
    </source>
</evidence>
<evidence type="ECO:0000256" key="3">
    <source>
        <dbReference type="SAM" id="MobiDB-lite"/>
    </source>
</evidence>
<evidence type="ECO:0000305" key="4"/>
<gene>
    <name type="primary">SPATA22</name>
    <name type="ORF">QnpA-20808</name>
    <name type="ORF">QtsA-14618</name>
</gene>
<organism>
    <name type="scientific">Macaca fascicularis</name>
    <name type="common">Crab-eating macaque</name>
    <name type="synonym">Cynomolgus monkey</name>
    <dbReference type="NCBI Taxonomy" id="9541"/>
    <lineage>
        <taxon>Eukaryota</taxon>
        <taxon>Metazoa</taxon>
        <taxon>Chordata</taxon>
        <taxon>Craniata</taxon>
        <taxon>Vertebrata</taxon>
        <taxon>Euteleostomi</taxon>
        <taxon>Mammalia</taxon>
        <taxon>Eutheria</taxon>
        <taxon>Euarchontoglires</taxon>
        <taxon>Primates</taxon>
        <taxon>Haplorrhini</taxon>
        <taxon>Catarrhini</taxon>
        <taxon>Cercopithecidae</taxon>
        <taxon>Cercopithecinae</taxon>
        <taxon>Macaca</taxon>
    </lineage>
</organism>